<reference key="1">
    <citation type="journal article" date="2006" name="Nat. Genet.">
        <title>The multidrug-resistant human pathogen Clostridium difficile has a highly mobile, mosaic genome.</title>
        <authorList>
            <person name="Sebaihia M."/>
            <person name="Wren B.W."/>
            <person name="Mullany P."/>
            <person name="Fairweather N.F."/>
            <person name="Minton N."/>
            <person name="Stabler R."/>
            <person name="Thomson N.R."/>
            <person name="Roberts A.P."/>
            <person name="Cerdeno-Tarraga A.M."/>
            <person name="Wang H."/>
            <person name="Holden M.T.G."/>
            <person name="Wright A."/>
            <person name="Churcher C."/>
            <person name="Quail M.A."/>
            <person name="Baker S."/>
            <person name="Bason N."/>
            <person name="Brooks K."/>
            <person name="Chillingworth T."/>
            <person name="Cronin A."/>
            <person name="Davis P."/>
            <person name="Dowd L."/>
            <person name="Fraser A."/>
            <person name="Feltwell T."/>
            <person name="Hance Z."/>
            <person name="Holroyd S."/>
            <person name="Jagels K."/>
            <person name="Moule S."/>
            <person name="Mungall K."/>
            <person name="Price C."/>
            <person name="Rabbinowitsch E."/>
            <person name="Sharp S."/>
            <person name="Simmonds M."/>
            <person name="Stevens K."/>
            <person name="Unwin L."/>
            <person name="Whithead S."/>
            <person name="Dupuy B."/>
            <person name="Dougan G."/>
            <person name="Barrell B."/>
            <person name="Parkhill J."/>
        </authorList>
    </citation>
    <scope>NUCLEOTIDE SEQUENCE [LARGE SCALE GENOMIC DNA]</scope>
    <source>
        <strain>630</strain>
    </source>
</reference>
<proteinExistence type="inferred from homology"/>
<sequence length="192" mass="21685">MRIWKVERNTLETQILVELNIDGSGKAEIDTGIGFLDHMLTLMSFHGKFDLKVICKGDTYVDDHHSVEDIGIAIGEAFKNALGDKKGIRRYSNIYIPMDESLSMVAIDISNRPYLVFNAKFDTQMIGSMSTQCFKEFFRAFVNESRVTLHINLLYGENDHHKIESIFKAFARALKEGSEIVSNEIASSKGVL</sequence>
<protein>
    <recommendedName>
        <fullName evidence="1">Imidazoleglycerol-phosphate dehydratase</fullName>
        <shortName evidence="1">IGPD</shortName>
        <ecNumber evidence="1">4.2.1.19</ecNumber>
    </recommendedName>
</protein>
<organism>
    <name type="scientific">Clostridioides difficile (strain 630)</name>
    <name type="common">Peptoclostridium difficile</name>
    <dbReference type="NCBI Taxonomy" id="272563"/>
    <lineage>
        <taxon>Bacteria</taxon>
        <taxon>Bacillati</taxon>
        <taxon>Bacillota</taxon>
        <taxon>Clostridia</taxon>
        <taxon>Peptostreptococcales</taxon>
        <taxon>Peptostreptococcaceae</taxon>
        <taxon>Clostridioides</taxon>
    </lineage>
</organism>
<comment type="catalytic activity">
    <reaction evidence="1">
        <text>D-erythro-1-(imidazol-4-yl)glycerol 3-phosphate = 3-(imidazol-4-yl)-2-oxopropyl phosphate + H2O</text>
        <dbReference type="Rhea" id="RHEA:11040"/>
        <dbReference type="ChEBI" id="CHEBI:15377"/>
        <dbReference type="ChEBI" id="CHEBI:57766"/>
        <dbReference type="ChEBI" id="CHEBI:58278"/>
        <dbReference type="EC" id="4.2.1.19"/>
    </reaction>
</comment>
<comment type="pathway">
    <text evidence="1">Amino-acid biosynthesis; L-histidine biosynthesis; L-histidine from 5-phospho-alpha-D-ribose 1-diphosphate: step 6/9.</text>
</comment>
<comment type="subcellular location">
    <subcellularLocation>
        <location evidence="1">Cytoplasm</location>
    </subcellularLocation>
</comment>
<comment type="similarity">
    <text evidence="1">Belongs to the imidazoleglycerol-phosphate dehydratase family.</text>
</comment>
<name>HIS7_CLOD6</name>
<keyword id="KW-0028">Amino-acid biosynthesis</keyword>
<keyword id="KW-0963">Cytoplasm</keyword>
<keyword id="KW-0368">Histidine biosynthesis</keyword>
<keyword id="KW-0456">Lyase</keyword>
<keyword id="KW-1185">Reference proteome</keyword>
<evidence type="ECO:0000255" key="1">
    <source>
        <dbReference type="HAMAP-Rule" id="MF_00076"/>
    </source>
</evidence>
<gene>
    <name evidence="1" type="primary">hisB</name>
    <name type="ordered locus">CD630_15500</name>
</gene>
<feature type="chain" id="PRO_1000010271" description="Imidazoleglycerol-phosphate dehydratase">
    <location>
        <begin position="1"/>
        <end position="192"/>
    </location>
</feature>
<dbReference type="EC" id="4.2.1.19" evidence="1"/>
<dbReference type="EMBL" id="AM180355">
    <property type="protein sequence ID" value="CAJ68415.1"/>
    <property type="molecule type" value="Genomic_DNA"/>
</dbReference>
<dbReference type="RefSeq" id="WP_003436680.1">
    <property type="nucleotide sequence ID" value="NZ_JAUPES010000019.1"/>
</dbReference>
<dbReference type="RefSeq" id="YP_001088051.1">
    <property type="nucleotide sequence ID" value="NC_009089.1"/>
</dbReference>
<dbReference type="SMR" id="Q18C69"/>
<dbReference type="STRING" id="272563.CD630_15500"/>
<dbReference type="EnsemblBacteria" id="CAJ68415">
    <property type="protein sequence ID" value="CAJ68415"/>
    <property type="gene ID" value="CD630_15500"/>
</dbReference>
<dbReference type="KEGG" id="cdf:CD630_15500"/>
<dbReference type="KEGG" id="pdc:CDIF630_01719"/>
<dbReference type="PATRIC" id="fig|272563.120.peg.1624"/>
<dbReference type="eggNOG" id="COG0131">
    <property type="taxonomic scope" value="Bacteria"/>
</dbReference>
<dbReference type="OrthoDB" id="9790411at2"/>
<dbReference type="PhylomeDB" id="Q18C69"/>
<dbReference type="BioCyc" id="PDIF272563:G12WB-1689-MONOMER"/>
<dbReference type="UniPathway" id="UPA00031">
    <property type="reaction ID" value="UER00011"/>
</dbReference>
<dbReference type="Proteomes" id="UP000001978">
    <property type="component" value="Chromosome"/>
</dbReference>
<dbReference type="GO" id="GO:0005737">
    <property type="term" value="C:cytoplasm"/>
    <property type="evidence" value="ECO:0007669"/>
    <property type="project" value="UniProtKB-SubCell"/>
</dbReference>
<dbReference type="GO" id="GO:0004424">
    <property type="term" value="F:imidazoleglycerol-phosphate dehydratase activity"/>
    <property type="evidence" value="ECO:0007669"/>
    <property type="project" value="UniProtKB-UniRule"/>
</dbReference>
<dbReference type="GO" id="GO:0000105">
    <property type="term" value="P:L-histidine biosynthetic process"/>
    <property type="evidence" value="ECO:0007669"/>
    <property type="project" value="UniProtKB-UniRule"/>
</dbReference>
<dbReference type="CDD" id="cd07914">
    <property type="entry name" value="IGPD"/>
    <property type="match status" value="1"/>
</dbReference>
<dbReference type="FunFam" id="3.30.230.40:FF:000001">
    <property type="entry name" value="Imidazoleglycerol-phosphate dehydratase HisB"/>
    <property type="match status" value="1"/>
</dbReference>
<dbReference type="FunFam" id="3.30.230.40:FF:000003">
    <property type="entry name" value="Imidazoleglycerol-phosphate dehydratase HisB"/>
    <property type="match status" value="1"/>
</dbReference>
<dbReference type="Gene3D" id="3.30.230.40">
    <property type="entry name" value="Imidazole glycerol phosphate dehydratase, domain 1"/>
    <property type="match status" value="2"/>
</dbReference>
<dbReference type="HAMAP" id="MF_00076">
    <property type="entry name" value="HisB"/>
    <property type="match status" value="1"/>
</dbReference>
<dbReference type="InterPro" id="IPR038494">
    <property type="entry name" value="IGPD_sf"/>
</dbReference>
<dbReference type="InterPro" id="IPR000807">
    <property type="entry name" value="ImidazoleglycerolP_deHydtase"/>
</dbReference>
<dbReference type="InterPro" id="IPR020565">
    <property type="entry name" value="ImidazoleglycerP_deHydtase_CS"/>
</dbReference>
<dbReference type="InterPro" id="IPR020568">
    <property type="entry name" value="Ribosomal_Su5_D2-typ_SF"/>
</dbReference>
<dbReference type="NCBIfam" id="NF002111">
    <property type="entry name" value="PRK00951.2-1"/>
    <property type="match status" value="1"/>
</dbReference>
<dbReference type="NCBIfam" id="NF002114">
    <property type="entry name" value="PRK00951.2-4"/>
    <property type="match status" value="1"/>
</dbReference>
<dbReference type="PANTHER" id="PTHR23133:SF2">
    <property type="entry name" value="IMIDAZOLEGLYCEROL-PHOSPHATE DEHYDRATASE"/>
    <property type="match status" value="1"/>
</dbReference>
<dbReference type="PANTHER" id="PTHR23133">
    <property type="entry name" value="IMIDAZOLEGLYCEROL-PHOSPHATE DEHYDRATASE HIS7"/>
    <property type="match status" value="1"/>
</dbReference>
<dbReference type="Pfam" id="PF00475">
    <property type="entry name" value="IGPD"/>
    <property type="match status" value="1"/>
</dbReference>
<dbReference type="SUPFAM" id="SSF54211">
    <property type="entry name" value="Ribosomal protein S5 domain 2-like"/>
    <property type="match status" value="2"/>
</dbReference>
<dbReference type="PROSITE" id="PS00954">
    <property type="entry name" value="IGP_DEHYDRATASE_1"/>
    <property type="match status" value="1"/>
</dbReference>
<dbReference type="PROSITE" id="PS00955">
    <property type="entry name" value="IGP_DEHYDRATASE_2"/>
    <property type="match status" value="1"/>
</dbReference>
<accession>Q18C69</accession>